<accession>Q6PGR9</accession>
<proteinExistence type="evidence at transcript level"/>
<protein>
    <recommendedName>
        <fullName>Tripartite motif-containing protein 72</fullName>
        <ecNumber evidence="2">2.3.2.27</ecNumber>
    </recommendedName>
    <alternativeName>
        <fullName evidence="3">Mitsugumin-53</fullName>
        <shortName>Mg53</shortName>
    </alternativeName>
</protein>
<evidence type="ECO:0000250" key="1"/>
<evidence type="ECO:0000250" key="2">
    <source>
        <dbReference type="UniProtKB" id="Q1XH17"/>
    </source>
</evidence>
<evidence type="ECO:0000250" key="3">
    <source>
        <dbReference type="UniProtKB" id="Q6ZMU5"/>
    </source>
</evidence>
<evidence type="ECO:0000255" key="4"/>
<evidence type="ECO:0000255" key="5">
    <source>
        <dbReference type="PROSITE-ProRule" id="PRU00024"/>
    </source>
</evidence>
<evidence type="ECO:0000255" key="6">
    <source>
        <dbReference type="PROSITE-ProRule" id="PRU00175"/>
    </source>
</evidence>
<evidence type="ECO:0000255" key="7">
    <source>
        <dbReference type="PROSITE-ProRule" id="PRU00548"/>
    </source>
</evidence>
<evidence type="ECO:0000305" key="8"/>
<keyword id="KW-1003">Cell membrane</keyword>
<keyword id="KW-0175">Coiled coil</keyword>
<keyword id="KW-0968">Cytoplasmic vesicle</keyword>
<keyword id="KW-1015">Disulfide bond</keyword>
<keyword id="KW-0268">Exocytosis</keyword>
<keyword id="KW-0472">Membrane</keyword>
<keyword id="KW-0479">Metal-binding</keyword>
<keyword id="KW-1185">Reference proteome</keyword>
<keyword id="KW-0808">Transferase</keyword>
<keyword id="KW-0813">Transport</keyword>
<keyword id="KW-0833">Ubl conjugation pathway</keyword>
<keyword id="KW-0862">Zinc</keyword>
<keyword id="KW-0863">Zinc-finger</keyword>
<organism>
    <name type="scientific">Xenopus laevis</name>
    <name type="common">African clawed frog</name>
    <dbReference type="NCBI Taxonomy" id="8355"/>
    <lineage>
        <taxon>Eukaryota</taxon>
        <taxon>Metazoa</taxon>
        <taxon>Chordata</taxon>
        <taxon>Craniata</taxon>
        <taxon>Vertebrata</taxon>
        <taxon>Euteleostomi</taxon>
        <taxon>Amphibia</taxon>
        <taxon>Batrachia</taxon>
        <taxon>Anura</taxon>
        <taxon>Pipoidea</taxon>
        <taxon>Pipidae</taxon>
        <taxon>Xenopodinae</taxon>
        <taxon>Xenopus</taxon>
        <taxon>Xenopus</taxon>
    </lineage>
</organism>
<feature type="chain" id="PRO_0000383153" description="Tripartite motif-containing protein 72">
    <location>
        <begin position="1"/>
        <end position="477"/>
    </location>
</feature>
<feature type="domain" description="B30.2/SPRY" evidence="7">
    <location>
        <begin position="272"/>
        <end position="476"/>
    </location>
</feature>
<feature type="zinc finger region" description="RING-type" evidence="6">
    <location>
        <begin position="16"/>
        <end position="59"/>
    </location>
</feature>
<feature type="zinc finger region" description="B box-type" evidence="5">
    <location>
        <begin position="83"/>
        <end position="124"/>
    </location>
</feature>
<feature type="coiled-coil region" evidence="2 4">
    <location>
        <begin position="135"/>
        <end position="232"/>
    </location>
</feature>
<feature type="binding site" evidence="2">
    <location>
        <position position="14"/>
    </location>
    <ligand>
        <name>Zn(2+)</name>
        <dbReference type="ChEBI" id="CHEBI:29105"/>
        <label>1</label>
        <note>structural for RING</note>
    </ligand>
</feature>
<feature type="binding site" evidence="2">
    <location>
        <position position="17"/>
    </location>
    <ligand>
        <name>Zn(2+)</name>
        <dbReference type="ChEBI" id="CHEBI:29105"/>
        <label>1</label>
        <note>structural for RING</note>
    </ligand>
</feature>
<feature type="binding site" evidence="2">
    <location>
        <position position="29"/>
    </location>
    <ligand>
        <name>Zn(2+)</name>
        <dbReference type="ChEBI" id="CHEBI:29105"/>
        <label>2</label>
        <note>structural for RING</note>
    </ligand>
</feature>
<feature type="binding site" evidence="2">
    <location>
        <position position="31"/>
    </location>
    <ligand>
        <name>Zn(2+)</name>
        <dbReference type="ChEBI" id="CHEBI:29105"/>
        <label>2</label>
        <note>structural for RING</note>
    </ligand>
</feature>
<feature type="binding site" evidence="2">
    <location>
        <position position="34"/>
    </location>
    <ligand>
        <name>Zn(2+)</name>
        <dbReference type="ChEBI" id="CHEBI:29105"/>
        <label>1</label>
        <note>structural for RING</note>
    </ligand>
</feature>
<feature type="binding site" evidence="2">
    <location>
        <position position="37"/>
    </location>
    <ligand>
        <name>Zn(2+)</name>
        <dbReference type="ChEBI" id="CHEBI:29105"/>
        <label>1</label>
        <note>structural for RING</note>
    </ligand>
</feature>
<feature type="binding site" evidence="2">
    <location>
        <position position="53"/>
    </location>
    <ligand>
        <name>Zn(2+)</name>
        <dbReference type="ChEBI" id="CHEBI:29105"/>
        <label>2</label>
        <note>structural for RING</note>
    </ligand>
</feature>
<feature type="binding site" evidence="2">
    <location>
        <position position="56"/>
    </location>
    <ligand>
        <name>Zn(2+)</name>
        <dbReference type="ChEBI" id="CHEBI:29105"/>
        <label>2</label>
        <note>structural for RING</note>
    </ligand>
</feature>
<feature type="binding site" evidence="2 5">
    <location>
        <position position="86"/>
    </location>
    <ligand>
        <name>Zn(2+)</name>
        <dbReference type="ChEBI" id="CHEBI:29105"/>
        <label>3</label>
        <note>structural for B-box</note>
    </ligand>
</feature>
<feature type="binding site" evidence="2 5">
    <location>
        <position position="89"/>
    </location>
    <ligand>
        <name>Zn(2+)</name>
        <dbReference type="ChEBI" id="CHEBI:29105"/>
        <label>3</label>
        <note>structural for B-box</note>
    </ligand>
</feature>
<feature type="binding site" evidence="2">
    <location>
        <position position="97"/>
    </location>
    <ligand>
        <name>Zn(2+)</name>
        <dbReference type="ChEBI" id="CHEBI:29105"/>
        <label>4</label>
        <note>structural for B-box</note>
    </ligand>
</feature>
<feature type="binding site" evidence="2">
    <location>
        <position position="100"/>
    </location>
    <ligand>
        <name>Zn(2+)</name>
        <dbReference type="ChEBI" id="CHEBI:29105"/>
        <label>4</label>
        <note>structural for B-box</note>
    </ligand>
</feature>
<feature type="binding site" evidence="2">
    <location>
        <position position="105"/>
    </location>
    <ligand>
        <name>Zn(2+)</name>
        <dbReference type="ChEBI" id="CHEBI:29105"/>
        <label>3</label>
        <note>structural for B-box</note>
    </ligand>
</feature>
<feature type="binding site" evidence="2 5">
    <location>
        <position position="108"/>
    </location>
    <ligand>
        <name>Zn(2+)</name>
        <dbReference type="ChEBI" id="CHEBI:29105"/>
        <label>3</label>
        <note>structural for B-box</note>
    </ligand>
</feature>
<feature type="binding site" evidence="2 5">
    <location>
        <position position="114"/>
    </location>
    <ligand>
        <name>Zn(2+)</name>
        <dbReference type="ChEBI" id="CHEBI:29105"/>
        <label>4</label>
        <note>structural for B-box</note>
    </ligand>
</feature>
<feature type="binding site" evidence="2">
    <location>
        <position position="117"/>
    </location>
    <ligand>
        <name>Zn(2+)</name>
        <dbReference type="ChEBI" id="CHEBI:29105"/>
        <label>4</label>
        <note>structural for B-box</note>
    </ligand>
</feature>
<feature type="disulfide bond" description="Interchain" evidence="2">
    <location>
        <position position="244"/>
    </location>
</feature>
<sequence>MSTPQLMQGMQKDLTCQLCLELFRAPVTPECGHTFCQGCLTGVPKNQDQNGSTPCPTCQSPSRPETLQINRQLEHLVQSFKQVPQGHCLEHMDPLSVYCEQDKELICGVCASLGKHKGHNIITASEAFAKLKRQLPQQQVILQEARLKKEKTVAVLDRQVAEVQDTVSRFKGNVKHQLNAMRSYLNIMEASLGKEADKAESAATEALLVERKTMGHYLDQLRQMEGVLKDVEGQEQTEFLRKYCVVAARLNKILSESPPPGRLDIQLPIISDEFKFQVWRKMFRALMPALENMTFDPDTAQQYLVVSSEGKSVECADQKQSVSDEPNRFDKSNCLVSKQSFTEGEHYWEVIVEDKPRWALGIISETANRKGKLHATPSNGFWIIGCKEGKVYEAHTEQKEPRVLRVEGRPEKIGVYLSFSDGVVSFFDSSDEDNLKLLYTFNERFSGRLHPFFDVCWHDKGKNSQPLKIFYPPAEQL</sequence>
<gene>
    <name type="primary">trim72</name>
    <name type="synonym">mg53</name>
</gene>
<reference key="1">
    <citation type="submission" date="2003-08" db="EMBL/GenBank/DDBJ databases">
        <authorList>
            <consortium name="NIH - Xenopus Gene Collection (XGC) project"/>
        </authorList>
    </citation>
    <scope>NUCLEOTIDE SEQUENCE [LARGE SCALE MRNA]</scope>
</reference>
<dbReference type="EC" id="2.3.2.27" evidence="2"/>
<dbReference type="EMBL" id="BC056854">
    <property type="protein sequence ID" value="AAH56854.1"/>
    <property type="molecule type" value="mRNA"/>
</dbReference>
<dbReference type="RefSeq" id="NP_001079922.1">
    <property type="nucleotide sequence ID" value="NM_001086453.2"/>
</dbReference>
<dbReference type="SMR" id="Q6PGR9"/>
<dbReference type="DNASU" id="379612"/>
<dbReference type="GeneID" id="379612"/>
<dbReference type="KEGG" id="xla:379612"/>
<dbReference type="AGR" id="Xenbase:XB-GENE-5896500"/>
<dbReference type="CTD" id="379612"/>
<dbReference type="Xenbase" id="XB-GENE-5896500">
    <property type="gene designation" value="trim72.L"/>
</dbReference>
<dbReference type="OrthoDB" id="6105938at2759"/>
<dbReference type="UniPathway" id="UPA00143"/>
<dbReference type="Proteomes" id="UP000186698">
    <property type="component" value="Chromosome 9_10L"/>
</dbReference>
<dbReference type="Bgee" id="379612">
    <property type="expression patterns" value="Expressed in muscle tissue and 11 other cell types or tissues"/>
</dbReference>
<dbReference type="GO" id="GO:0005737">
    <property type="term" value="C:cytoplasm"/>
    <property type="evidence" value="ECO:0000318"/>
    <property type="project" value="GO_Central"/>
</dbReference>
<dbReference type="GO" id="GO:0030659">
    <property type="term" value="C:cytoplasmic vesicle membrane"/>
    <property type="evidence" value="ECO:0000250"/>
    <property type="project" value="UniProtKB"/>
</dbReference>
<dbReference type="GO" id="GO:0042383">
    <property type="term" value="C:sarcolemma"/>
    <property type="evidence" value="ECO:0000250"/>
    <property type="project" value="UniProtKB"/>
</dbReference>
<dbReference type="GO" id="GO:0001786">
    <property type="term" value="F:phosphatidylserine binding"/>
    <property type="evidence" value="ECO:0000250"/>
    <property type="project" value="UniProtKB"/>
</dbReference>
<dbReference type="GO" id="GO:0061630">
    <property type="term" value="F:ubiquitin protein ligase activity"/>
    <property type="evidence" value="ECO:0000318"/>
    <property type="project" value="GO_Central"/>
</dbReference>
<dbReference type="GO" id="GO:0008270">
    <property type="term" value="F:zinc ion binding"/>
    <property type="evidence" value="ECO:0007669"/>
    <property type="project" value="UniProtKB-KW"/>
</dbReference>
<dbReference type="GO" id="GO:0006887">
    <property type="term" value="P:exocytosis"/>
    <property type="evidence" value="ECO:0007669"/>
    <property type="project" value="UniProtKB-KW"/>
</dbReference>
<dbReference type="GO" id="GO:0045087">
    <property type="term" value="P:innate immune response"/>
    <property type="evidence" value="ECO:0000318"/>
    <property type="project" value="GO_Central"/>
</dbReference>
<dbReference type="GO" id="GO:0007517">
    <property type="term" value="P:muscle organ development"/>
    <property type="evidence" value="ECO:0000250"/>
    <property type="project" value="UniProtKB"/>
</dbReference>
<dbReference type="GO" id="GO:0003012">
    <property type="term" value="P:muscle system process"/>
    <property type="evidence" value="ECO:0000250"/>
    <property type="project" value="UniProtKB"/>
</dbReference>
<dbReference type="GO" id="GO:0001778">
    <property type="term" value="P:plasma membrane repair"/>
    <property type="evidence" value="ECO:0000250"/>
    <property type="project" value="UniProtKB"/>
</dbReference>
<dbReference type="GO" id="GO:0043161">
    <property type="term" value="P:proteasome-mediated ubiquitin-dependent protein catabolic process"/>
    <property type="evidence" value="ECO:0000318"/>
    <property type="project" value="GO_Central"/>
</dbReference>
<dbReference type="GO" id="GO:0051260">
    <property type="term" value="P:protein homooligomerization"/>
    <property type="evidence" value="ECO:0000250"/>
    <property type="project" value="UniProtKB"/>
</dbReference>
<dbReference type="CDD" id="cd19797">
    <property type="entry name" value="Bbox2_TRIM72_C-IV"/>
    <property type="match status" value="1"/>
</dbReference>
<dbReference type="CDD" id="cd16612">
    <property type="entry name" value="RING-HC_TRIM72_C-IV"/>
    <property type="match status" value="1"/>
</dbReference>
<dbReference type="CDD" id="cd13742">
    <property type="entry name" value="SPRY_PRY_TRIM72"/>
    <property type="match status" value="1"/>
</dbReference>
<dbReference type="FunFam" id="2.60.120.920:FF:000027">
    <property type="entry name" value="E3 ubiquitin-protein ligase TRIM50"/>
    <property type="match status" value="1"/>
</dbReference>
<dbReference type="FunFam" id="3.30.40.10:FF:000487">
    <property type="entry name" value="tripartite motif-containing protein 72"/>
    <property type="match status" value="1"/>
</dbReference>
<dbReference type="Gene3D" id="2.60.120.920">
    <property type="match status" value="1"/>
</dbReference>
<dbReference type="Gene3D" id="3.30.160.60">
    <property type="entry name" value="Classic Zinc Finger"/>
    <property type="match status" value="1"/>
</dbReference>
<dbReference type="Gene3D" id="3.30.40.10">
    <property type="entry name" value="Zinc/RING finger domain, C3HC4 (zinc finger)"/>
    <property type="match status" value="1"/>
</dbReference>
<dbReference type="InterPro" id="IPR001870">
    <property type="entry name" value="B30.2/SPRY"/>
</dbReference>
<dbReference type="InterPro" id="IPR043136">
    <property type="entry name" value="B30.2/SPRY_sf"/>
</dbReference>
<dbReference type="InterPro" id="IPR003879">
    <property type="entry name" value="Butyrophylin_SPRY"/>
</dbReference>
<dbReference type="InterPro" id="IPR013320">
    <property type="entry name" value="ConA-like_dom_sf"/>
</dbReference>
<dbReference type="InterPro" id="IPR006574">
    <property type="entry name" value="PRY"/>
</dbReference>
<dbReference type="InterPro" id="IPR003877">
    <property type="entry name" value="SPRY_dom"/>
</dbReference>
<dbReference type="InterPro" id="IPR050143">
    <property type="entry name" value="TRIM/RBCC"/>
</dbReference>
<dbReference type="InterPro" id="IPR027370">
    <property type="entry name" value="Znf-RING_euk"/>
</dbReference>
<dbReference type="InterPro" id="IPR000315">
    <property type="entry name" value="Znf_B-box"/>
</dbReference>
<dbReference type="InterPro" id="IPR001841">
    <property type="entry name" value="Znf_RING"/>
</dbReference>
<dbReference type="InterPro" id="IPR013083">
    <property type="entry name" value="Znf_RING/FYVE/PHD"/>
</dbReference>
<dbReference type="InterPro" id="IPR017907">
    <property type="entry name" value="Znf_RING_CS"/>
</dbReference>
<dbReference type="PANTHER" id="PTHR24103">
    <property type="entry name" value="E3 UBIQUITIN-PROTEIN LIGASE TRIM"/>
    <property type="match status" value="1"/>
</dbReference>
<dbReference type="Pfam" id="PF13765">
    <property type="entry name" value="PRY"/>
    <property type="match status" value="1"/>
</dbReference>
<dbReference type="Pfam" id="PF00622">
    <property type="entry name" value="SPRY"/>
    <property type="match status" value="1"/>
</dbReference>
<dbReference type="Pfam" id="PF00643">
    <property type="entry name" value="zf-B_box"/>
    <property type="match status" value="1"/>
</dbReference>
<dbReference type="Pfam" id="PF13445">
    <property type="entry name" value="zf-RING_UBOX"/>
    <property type="match status" value="1"/>
</dbReference>
<dbReference type="PRINTS" id="PR01407">
    <property type="entry name" value="BUTYPHLNCDUF"/>
</dbReference>
<dbReference type="SMART" id="SM00336">
    <property type="entry name" value="BBOX"/>
    <property type="match status" value="1"/>
</dbReference>
<dbReference type="SMART" id="SM00589">
    <property type="entry name" value="PRY"/>
    <property type="match status" value="1"/>
</dbReference>
<dbReference type="SMART" id="SM00184">
    <property type="entry name" value="RING"/>
    <property type="match status" value="1"/>
</dbReference>
<dbReference type="SMART" id="SM00449">
    <property type="entry name" value="SPRY"/>
    <property type="match status" value="1"/>
</dbReference>
<dbReference type="SUPFAM" id="SSF57845">
    <property type="entry name" value="B-box zinc-binding domain"/>
    <property type="match status" value="1"/>
</dbReference>
<dbReference type="SUPFAM" id="SSF49899">
    <property type="entry name" value="Concanavalin A-like lectins/glucanases"/>
    <property type="match status" value="1"/>
</dbReference>
<dbReference type="SUPFAM" id="SSF57850">
    <property type="entry name" value="RING/U-box"/>
    <property type="match status" value="1"/>
</dbReference>
<dbReference type="PROSITE" id="PS50188">
    <property type="entry name" value="B302_SPRY"/>
    <property type="match status" value="1"/>
</dbReference>
<dbReference type="PROSITE" id="PS50119">
    <property type="entry name" value="ZF_BBOX"/>
    <property type="match status" value="1"/>
</dbReference>
<dbReference type="PROSITE" id="PS00518">
    <property type="entry name" value="ZF_RING_1"/>
    <property type="match status" value="1"/>
</dbReference>
<dbReference type="PROSITE" id="PS50089">
    <property type="entry name" value="ZF_RING_2"/>
    <property type="match status" value="1"/>
</dbReference>
<comment type="function">
    <text evidence="2">Muscle-specific E3 ubiquitin-protein ligase that plays a central role in cell membrane repair by nucleating the assembly of the repair machinery at injury sites (By similarity). Acts as a sensor of oxidation: upon membrane damage, entry of extracellular oxidative environment results in disulfide bond formation and homooligomerization at the injury site (By similarity). This oligomerization acts as a nucleation site for recruitment of TRIM72-containing vesicles to the injury site, leading to membrane patch formation (By similarity). Probably acts upstream of the Ca(2+)-dependent membrane resealing process (By similarity). Required for transport of DYSF to sites of cell injury during repair patch formation (By similarity). Regulates membrane budding and exocytosis (By similarity). May be involved in the regulation of the mobility of KCNB1-containing endocytic vesicles (By similarity).</text>
</comment>
<comment type="catalytic activity">
    <reaction evidence="2">
        <text>S-ubiquitinyl-[E2 ubiquitin-conjugating enzyme]-L-cysteine + [acceptor protein]-L-lysine = [E2 ubiquitin-conjugating enzyme]-L-cysteine + N(6)-ubiquitinyl-[acceptor protein]-L-lysine.</text>
        <dbReference type="EC" id="2.3.2.27"/>
    </reaction>
</comment>
<comment type="activity regulation">
    <text evidence="2">Specifically binds phosphatidylserine (By similarity). The binding to phospholipids enhances ubiquitination activity (By similarity).</text>
</comment>
<comment type="pathway">
    <text evidence="2">Protein modification; protein ubiquitination.</text>
</comment>
<comment type="subunit">
    <text evidence="2">Homodimer (By similarity). Homooligomer; disulfide-linked (By similarity). Oligomerizes on the phospholipid membrane (By similarity).</text>
</comment>
<comment type="subcellular location">
    <subcellularLocation>
        <location evidence="1">Cell membrane</location>
        <location evidence="1">Sarcolemma</location>
    </subcellularLocation>
    <subcellularLocation>
        <location evidence="3">Cytoplasmic vesicle membrane</location>
    </subcellularLocation>
    <text evidence="1">Tethered to plasma membrane and cytoplasmic vesicles via its interaction with phosphatidylserine.</text>
</comment>
<comment type="domain">
    <text evidence="2">The RING domain is flexible in both the dimer and oligomer (By similarity). Binding to the negatively charged phosphatidylserine lipids is mediated by the positively charged PRYSPRY domains and is inhibited by Ca(2+) (By similarity).</text>
</comment>
<comment type="PTM">
    <text evidence="1">Disulfide bond formation at Cys-244 occurs in case of membrane damage that cause the entry of the oxidized milieu of the extracellular space, resulting in homooligomerization.</text>
</comment>
<comment type="similarity">
    <text evidence="8">Belongs to the TRIM/RBCC family.</text>
</comment>
<name>TRI72_XENLA</name>